<name>GPMA_ECOL6</name>
<accession>P62708</accession>
<accession>P31217</accession>
<protein>
    <recommendedName>
        <fullName evidence="2">2,3-bisphosphoglycerate-dependent phosphoglycerate mutase</fullName>
        <shortName evidence="2">BPG-dependent PGAM</shortName>
        <shortName evidence="2">PGAM</shortName>
        <shortName evidence="2">Phosphoglyceromutase</shortName>
        <shortName evidence="2">dPGM</shortName>
        <ecNumber evidence="2">5.4.2.11</ecNumber>
    </recommendedName>
</protein>
<organism>
    <name type="scientific">Escherichia coli O6:H1 (strain CFT073 / ATCC 700928 / UPEC)</name>
    <dbReference type="NCBI Taxonomy" id="199310"/>
    <lineage>
        <taxon>Bacteria</taxon>
        <taxon>Pseudomonadati</taxon>
        <taxon>Pseudomonadota</taxon>
        <taxon>Gammaproteobacteria</taxon>
        <taxon>Enterobacterales</taxon>
        <taxon>Enterobacteriaceae</taxon>
        <taxon>Escherichia</taxon>
    </lineage>
</organism>
<sequence length="250" mass="28556">MAVTKLVLVRHGESQWNKENRFTGWYDVDLSEKGVSEAKAAGKLLKEEGYSFDFAYTSVLKRAIHTLWNVLDELDQAWLPVEKSWKLNERHYGALQGLNKAETAEKYGDEQVKQWRRGFAVTPPELTKDDERYPGHDPRYAKLSEKELPLTESLALTIDRVIPYWNETILPRMKSGERVIIAAHGNSLRALVKYLDNMSEEEILELNIPTGVPLVYEFDENFKPLKRYYLGNADEIAAKAAAVANQGKAK</sequence>
<proteinExistence type="inferred from homology"/>
<gene>
    <name evidence="2" type="primary">gpmA</name>
    <name type="synonym">gpm</name>
    <name type="synonym">pgm</name>
    <name type="synonym">pgmA</name>
    <name type="ordered locus">c0831</name>
</gene>
<dbReference type="EC" id="5.4.2.11" evidence="2"/>
<dbReference type="EMBL" id="AE014075">
    <property type="protein sequence ID" value="AAN79304.1"/>
    <property type="status" value="ALT_INIT"/>
    <property type="molecule type" value="Genomic_DNA"/>
</dbReference>
<dbReference type="RefSeq" id="WP_001295305.1">
    <property type="nucleotide sequence ID" value="NZ_CP051263.1"/>
</dbReference>
<dbReference type="SMR" id="P62708"/>
<dbReference type="STRING" id="199310.c0831"/>
<dbReference type="GeneID" id="93776726"/>
<dbReference type="KEGG" id="ecc:c0831"/>
<dbReference type="eggNOG" id="COG0588">
    <property type="taxonomic scope" value="Bacteria"/>
</dbReference>
<dbReference type="HOGENOM" id="CLU_033323_1_1_6"/>
<dbReference type="UniPathway" id="UPA00109">
    <property type="reaction ID" value="UER00186"/>
</dbReference>
<dbReference type="Proteomes" id="UP000001410">
    <property type="component" value="Chromosome"/>
</dbReference>
<dbReference type="GO" id="GO:0004619">
    <property type="term" value="F:phosphoglycerate mutase activity"/>
    <property type="evidence" value="ECO:0007669"/>
    <property type="project" value="UniProtKB-EC"/>
</dbReference>
<dbReference type="GO" id="GO:0006094">
    <property type="term" value="P:gluconeogenesis"/>
    <property type="evidence" value="ECO:0007669"/>
    <property type="project" value="UniProtKB-UniRule"/>
</dbReference>
<dbReference type="GO" id="GO:0006096">
    <property type="term" value="P:glycolytic process"/>
    <property type="evidence" value="ECO:0007669"/>
    <property type="project" value="UniProtKB-UniRule"/>
</dbReference>
<dbReference type="CDD" id="cd07067">
    <property type="entry name" value="HP_PGM_like"/>
    <property type="match status" value="1"/>
</dbReference>
<dbReference type="FunFam" id="3.40.50.1240:FF:000003">
    <property type="entry name" value="2,3-bisphosphoglycerate-dependent phosphoglycerate mutase"/>
    <property type="match status" value="1"/>
</dbReference>
<dbReference type="Gene3D" id="3.40.50.1240">
    <property type="entry name" value="Phosphoglycerate mutase-like"/>
    <property type="match status" value="1"/>
</dbReference>
<dbReference type="HAMAP" id="MF_01039">
    <property type="entry name" value="PGAM_GpmA"/>
    <property type="match status" value="1"/>
</dbReference>
<dbReference type="InterPro" id="IPR013078">
    <property type="entry name" value="His_Pase_superF_clade-1"/>
</dbReference>
<dbReference type="InterPro" id="IPR029033">
    <property type="entry name" value="His_PPase_superfam"/>
</dbReference>
<dbReference type="InterPro" id="IPR001345">
    <property type="entry name" value="PG/BPGM_mutase_AS"/>
</dbReference>
<dbReference type="InterPro" id="IPR005952">
    <property type="entry name" value="Phosphogly_mut1"/>
</dbReference>
<dbReference type="NCBIfam" id="TIGR01258">
    <property type="entry name" value="pgm_1"/>
    <property type="match status" value="1"/>
</dbReference>
<dbReference type="NCBIfam" id="NF010713">
    <property type="entry name" value="PRK14115.1"/>
    <property type="match status" value="1"/>
</dbReference>
<dbReference type="PANTHER" id="PTHR11931">
    <property type="entry name" value="PHOSPHOGLYCERATE MUTASE"/>
    <property type="match status" value="1"/>
</dbReference>
<dbReference type="Pfam" id="PF00300">
    <property type="entry name" value="His_Phos_1"/>
    <property type="match status" value="1"/>
</dbReference>
<dbReference type="PIRSF" id="PIRSF000709">
    <property type="entry name" value="6PFK_2-Ptase"/>
    <property type="match status" value="1"/>
</dbReference>
<dbReference type="SMART" id="SM00855">
    <property type="entry name" value="PGAM"/>
    <property type="match status" value="1"/>
</dbReference>
<dbReference type="SUPFAM" id="SSF53254">
    <property type="entry name" value="Phosphoglycerate mutase-like"/>
    <property type="match status" value="1"/>
</dbReference>
<dbReference type="PROSITE" id="PS00175">
    <property type="entry name" value="PG_MUTASE"/>
    <property type="match status" value="1"/>
</dbReference>
<feature type="initiator methionine" description="Removed" evidence="1">
    <location>
        <position position="1"/>
    </location>
</feature>
<feature type="chain" id="PRO_0000179875" description="2,3-bisphosphoglycerate-dependent phosphoglycerate mutase">
    <location>
        <begin position="2"/>
        <end position="250"/>
    </location>
</feature>
<feature type="active site" description="Tele-phosphohistidine intermediate" evidence="2">
    <location>
        <position position="11"/>
    </location>
</feature>
<feature type="active site" description="Proton donor/acceptor" evidence="2">
    <location>
        <position position="89"/>
    </location>
</feature>
<feature type="binding site" evidence="2">
    <location>
        <begin position="10"/>
        <end position="17"/>
    </location>
    <ligand>
        <name>substrate</name>
    </ligand>
</feature>
<feature type="binding site" evidence="2">
    <location>
        <begin position="23"/>
        <end position="24"/>
    </location>
    <ligand>
        <name>substrate</name>
    </ligand>
</feature>
<feature type="binding site" evidence="2">
    <location>
        <position position="62"/>
    </location>
    <ligand>
        <name>substrate</name>
    </ligand>
</feature>
<feature type="binding site" evidence="2">
    <location>
        <begin position="89"/>
        <end position="92"/>
    </location>
    <ligand>
        <name>substrate</name>
    </ligand>
</feature>
<feature type="binding site" evidence="2">
    <location>
        <position position="100"/>
    </location>
    <ligand>
        <name>substrate</name>
    </ligand>
</feature>
<feature type="binding site" evidence="2">
    <location>
        <begin position="116"/>
        <end position="117"/>
    </location>
    <ligand>
        <name>substrate</name>
    </ligand>
</feature>
<feature type="binding site" evidence="2">
    <location>
        <begin position="185"/>
        <end position="186"/>
    </location>
    <ligand>
        <name>substrate</name>
    </ligand>
</feature>
<feature type="site" description="Transition state stabilizer" evidence="2">
    <location>
        <position position="184"/>
    </location>
</feature>
<evidence type="ECO:0000250" key="1"/>
<evidence type="ECO:0000255" key="2">
    <source>
        <dbReference type="HAMAP-Rule" id="MF_01039"/>
    </source>
</evidence>
<evidence type="ECO:0000305" key="3"/>
<reference key="1">
    <citation type="journal article" date="2002" name="Proc. Natl. Acad. Sci. U.S.A.">
        <title>Extensive mosaic structure revealed by the complete genome sequence of uropathogenic Escherichia coli.</title>
        <authorList>
            <person name="Welch R.A."/>
            <person name="Burland V."/>
            <person name="Plunkett G. III"/>
            <person name="Redford P."/>
            <person name="Roesch P."/>
            <person name="Rasko D."/>
            <person name="Buckles E.L."/>
            <person name="Liou S.-R."/>
            <person name="Boutin A."/>
            <person name="Hackett J."/>
            <person name="Stroud D."/>
            <person name="Mayhew G.F."/>
            <person name="Rose D.J."/>
            <person name="Zhou S."/>
            <person name="Schwartz D.C."/>
            <person name="Perna N.T."/>
            <person name="Mobley H.L.T."/>
            <person name="Donnenberg M.S."/>
            <person name="Blattner F.R."/>
        </authorList>
    </citation>
    <scope>NUCLEOTIDE SEQUENCE [LARGE SCALE GENOMIC DNA]</scope>
    <source>
        <strain>CFT073 / ATCC 700928 / UPEC</strain>
    </source>
</reference>
<keyword id="KW-0312">Gluconeogenesis</keyword>
<keyword id="KW-0324">Glycolysis</keyword>
<keyword id="KW-0413">Isomerase</keyword>
<keyword id="KW-1185">Reference proteome</keyword>
<comment type="function">
    <text evidence="2">Catalyzes the interconversion of 2-phosphoglycerate and 3-phosphoglycerate.</text>
</comment>
<comment type="catalytic activity">
    <reaction evidence="2">
        <text>(2R)-2-phosphoglycerate = (2R)-3-phosphoglycerate</text>
        <dbReference type="Rhea" id="RHEA:15901"/>
        <dbReference type="ChEBI" id="CHEBI:58272"/>
        <dbReference type="ChEBI" id="CHEBI:58289"/>
        <dbReference type="EC" id="5.4.2.11"/>
    </reaction>
</comment>
<comment type="pathway">
    <text evidence="2">Carbohydrate degradation; glycolysis; pyruvate from D-glyceraldehyde 3-phosphate: step 3/5.</text>
</comment>
<comment type="subunit">
    <text evidence="2">Homodimer.</text>
</comment>
<comment type="similarity">
    <text evidence="2">Belongs to the phosphoglycerate mutase family. BPG-dependent PGAM subfamily.</text>
</comment>
<comment type="sequence caution" evidence="3">
    <conflict type="erroneous initiation">
        <sequence resource="EMBL-CDS" id="AAN79304"/>
    </conflict>
    <text>Extended N-terminus.</text>
</comment>